<gene>
    <name evidence="1" type="primary">rplB</name>
    <name type="ordered locus">Glov_1349</name>
</gene>
<accession>B3E7T8</accession>
<proteinExistence type="inferred from homology"/>
<keyword id="KW-1185">Reference proteome</keyword>
<keyword id="KW-0687">Ribonucleoprotein</keyword>
<keyword id="KW-0689">Ribosomal protein</keyword>
<keyword id="KW-0694">RNA-binding</keyword>
<keyword id="KW-0699">rRNA-binding</keyword>
<reference key="1">
    <citation type="submission" date="2008-05" db="EMBL/GenBank/DDBJ databases">
        <title>Complete sequence of chromosome of Geobacter lovleyi SZ.</title>
        <authorList>
            <consortium name="US DOE Joint Genome Institute"/>
            <person name="Lucas S."/>
            <person name="Copeland A."/>
            <person name="Lapidus A."/>
            <person name="Glavina del Rio T."/>
            <person name="Dalin E."/>
            <person name="Tice H."/>
            <person name="Bruce D."/>
            <person name="Goodwin L."/>
            <person name="Pitluck S."/>
            <person name="Chertkov O."/>
            <person name="Meincke L."/>
            <person name="Brettin T."/>
            <person name="Detter J.C."/>
            <person name="Han C."/>
            <person name="Tapia R."/>
            <person name="Kuske C.R."/>
            <person name="Schmutz J."/>
            <person name="Larimer F."/>
            <person name="Land M."/>
            <person name="Hauser L."/>
            <person name="Kyrpides N."/>
            <person name="Mikhailova N."/>
            <person name="Sung Y."/>
            <person name="Fletcher K.E."/>
            <person name="Ritalahti K.M."/>
            <person name="Loeffler F.E."/>
            <person name="Richardson P."/>
        </authorList>
    </citation>
    <scope>NUCLEOTIDE SEQUENCE [LARGE SCALE GENOMIC DNA]</scope>
    <source>
        <strain>ATCC BAA-1151 / DSM 17278 / SZ</strain>
    </source>
</reference>
<comment type="function">
    <text evidence="1">One of the primary rRNA binding proteins. Required for association of the 30S and 50S subunits to form the 70S ribosome, for tRNA binding and peptide bond formation. It has been suggested to have peptidyltransferase activity; this is somewhat controversial. Makes several contacts with the 16S rRNA in the 70S ribosome.</text>
</comment>
<comment type="subunit">
    <text evidence="1">Part of the 50S ribosomal subunit. Forms a bridge to the 30S subunit in the 70S ribosome.</text>
</comment>
<comment type="similarity">
    <text evidence="1">Belongs to the universal ribosomal protein uL2 family.</text>
</comment>
<dbReference type="EMBL" id="CP001089">
    <property type="protein sequence ID" value="ACD95070.1"/>
    <property type="molecule type" value="Genomic_DNA"/>
</dbReference>
<dbReference type="RefSeq" id="WP_012469415.1">
    <property type="nucleotide sequence ID" value="NC_010814.1"/>
</dbReference>
<dbReference type="SMR" id="B3E7T8"/>
<dbReference type="STRING" id="398767.Glov_1349"/>
<dbReference type="KEGG" id="glo:Glov_1349"/>
<dbReference type="eggNOG" id="COG0090">
    <property type="taxonomic scope" value="Bacteria"/>
</dbReference>
<dbReference type="HOGENOM" id="CLU_036235_2_1_7"/>
<dbReference type="OrthoDB" id="9778722at2"/>
<dbReference type="Proteomes" id="UP000002420">
    <property type="component" value="Chromosome"/>
</dbReference>
<dbReference type="GO" id="GO:0015934">
    <property type="term" value="C:large ribosomal subunit"/>
    <property type="evidence" value="ECO:0007669"/>
    <property type="project" value="InterPro"/>
</dbReference>
<dbReference type="GO" id="GO:0019843">
    <property type="term" value="F:rRNA binding"/>
    <property type="evidence" value="ECO:0007669"/>
    <property type="project" value="UniProtKB-UniRule"/>
</dbReference>
<dbReference type="GO" id="GO:0003735">
    <property type="term" value="F:structural constituent of ribosome"/>
    <property type="evidence" value="ECO:0007669"/>
    <property type="project" value="InterPro"/>
</dbReference>
<dbReference type="GO" id="GO:0016740">
    <property type="term" value="F:transferase activity"/>
    <property type="evidence" value="ECO:0007669"/>
    <property type="project" value="InterPro"/>
</dbReference>
<dbReference type="GO" id="GO:0002181">
    <property type="term" value="P:cytoplasmic translation"/>
    <property type="evidence" value="ECO:0007669"/>
    <property type="project" value="TreeGrafter"/>
</dbReference>
<dbReference type="FunFam" id="2.30.30.30:FF:000001">
    <property type="entry name" value="50S ribosomal protein L2"/>
    <property type="match status" value="1"/>
</dbReference>
<dbReference type="FunFam" id="2.40.50.140:FF:000003">
    <property type="entry name" value="50S ribosomal protein L2"/>
    <property type="match status" value="1"/>
</dbReference>
<dbReference type="FunFam" id="4.10.950.10:FF:000001">
    <property type="entry name" value="50S ribosomal protein L2"/>
    <property type="match status" value="1"/>
</dbReference>
<dbReference type="Gene3D" id="2.30.30.30">
    <property type="match status" value="1"/>
</dbReference>
<dbReference type="Gene3D" id="2.40.50.140">
    <property type="entry name" value="Nucleic acid-binding proteins"/>
    <property type="match status" value="1"/>
</dbReference>
<dbReference type="Gene3D" id="4.10.950.10">
    <property type="entry name" value="Ribosomal protein L2, domain 3"/>
    <property type="match status" value="1"/>
</dbReference>
<dbReference type="HAMAP" id="MF_01320_B">
    <property type="entry name" value="Ribosomal_uL2_B"/>
    <property type="match status" value="1"/>
</dbReference>
<dbReference type="InterPro" id="IPR012340">
    <property type="entry name" value="NA-bd_OB-fold"/>
</dbReference>
<dbReference type="InterPro" id="IPR014722">
    <property type="entry name" value="Rib_uL2_dom2"/>
</dbReference>
<dbReference type="InterPro" id="IPR002171">
    <property type="entry name" value="Ribosomal_uL2"/>
</dbReference>
<dbReference type="InterPro" id="IPR005880">
    <property type="entry name" value="Ribosomal_uL2_bac/org-type"/>
</dbReference>
<dbReference type="InterPro" id="IPR022669">
    <property type="entry name" value="Ribosomal_uL2_C"/>
</dbReference>
<dbReference type="InterPro" id="IPR022671">
    <property type="entry name" value="Ribosomal_uL2_CS"/>
</dbReference>
<dbReference type="InterPro" id="IPR014726">
    <property type="entry name" value="Ribosomal_uL2_dom3"/>
</dbReference>
<dbReference type="InterPro" id="IPR022666">
    <property type="entry name" value="Ribosomal_uL2_RNA-bd_dom"/>
</dbReference>
<dbReference type="InterPro" id="IPR008991">
    <property type="entry name" value="Translation_prot_SH3-like_sf"/>
</dbReference>
<dbReference type="NCBIfam" id="TIGR01171">
    <property type="entry name" value="rplB_bact"/>
    <property type="match status" value="1"/>
</dbReference>
<dbReference type="PANTHER" id="PTHR13691:SF5">
    <property type="entry name" value="LARGE RIBOSOMAL SUBUNIT PROTEIN UL2M"/>
    <property type="match status" value="1"/>
</dbReference>
<dbReference type="PANTHER" id="PTHR13691">
    <property type="entry name" value="RIBOSOMAL PROTEIN L2"/>
    <property type="match status" value="1"/>
</dbReference>
<dbReference type="Pfam" id="PF00181">
    <property type="entry name" value="Ribosomal_L2"/>
    <property type="match status" value="1"/>
</dbReference>
<dbReference type="Pfam" id="PF03947">
    <property type="entry name" value="Ribosomal_L2_C"/>
    <property type="match status" value="1"/>
</dbReference>
<dbReference type="PIRSF" id="PIRSF002158">
    <property type="entry name" value="Ribosomal_L2"/>
    <property type="match status" value="1"/>
</dbReference>
<dbReference type="SMART" id="SM01383">
    <property type="entry name" value="Ribosomal_L2"/>
    <property type="match status" value="1"/>
</dbReference>
<dbReference type="SMART" id="SM01382">
    <property type="entry name" value="Ribosomal_L2_C"/>
    <property type="match status" value="1"/>
</dbReference>
<dbReference type="SUPFAM" id="SSF50249">
    <property type="entry name" value="Nucleic acid-binding proteins"/>
    <property type="match status" value="1"/>
</dbReference>
<dbReference type="SUPFAM" id="SSF50104">
    <property type="entry name" value="Translation proteins SH3-like domain"/>
    <property type="match status" value="1"/>
</dbReference>
<dbReference type="PROSITE" id="PS00467">
    <property type="entry name" value="RIBOSOMAL_L2"/>
    <property type="match status" value="1"/>
</dbReference>
<protein>
    <recommendedName>
        <fullName evidence="1">Large ribosomal subunit protein uL2</fullName>
    </recommendedName>
    <alternativeName>
        <fullName evidence="3">50S ribosomal protein L2</fullName>
    </alternativeName>
</protein>
<organism>
    <name type="scientific">Trichlorobacter lovleyi (strain ATCC BAA-1151 / DSM 17278 / SZ)</name>
    <name type="common">Geobacter lovleyi</name>
    <dbReference type="NCBI Taxonomy" id="398767"/>
    <lineage>
        <taxon>Bacteria</taxon>
        <taxon>Pseudomonadati</taxon>
        <taxon>Thermodesulfobacteriota</taxon>
        <taxon>Desulfuromonadia</taxon>
        <taxon>Geobacterales</taxon>
        <taxon>Geobacteraceae</taxon>
        <taxon>Trichlorobacter</taxon>
    </lineage>
</organism>
<sequence>MAIKSYKPTSAGRRHQTCSTFEEITSTTPEKSLLVKIKKTGGRNHFGRVTARHQGGGHKQKYRMIDFRRDKRGIPAKVATIEYDPNRSARIALLHYTDGEKRYILAPLDLKVGDTVLSGPEADIKPGNSLPLRSIPLGTIIHNIELKIGKGAQLARSAGTFAQLMSKEGKYSQVKLPSGEVRLVLQDCYATIGQVGNIDHENVCLGKAGRSRWLGKRPKVRGVAMNPVDHPHGGGEGRTSGGRHPVTPWGIPTKGYKTRTNKTSDRFIVKKRTK</sequence>
<evidence type="ECO:0000255" key="1">
    <source>
        <dbReference type="HAMAP-Rule" id="MF_01320"/>
    </source>
</evidence>
<evidence type="ECO:0000256" key="2">
    <source>
        <dbReference type="SAM" id="MobiDB-lite"/>
    </source>
</evidence>
<evidence type="ECO:0000305" key="3"/>
<name>RL2_TRIL1</name>
<feature type="chain" id="PRO_1000141558" description="Large ribosomal subunit protein uL2">
    <location>
        <begin position="1"/>
        <end position="274"/>
    </location>
</feature>
<feature type="region of interest" description="Disordered" evidence="2">
    <location>
        <begin position="223"/>
        <end position="256"/>
    </location>
</feature>